<protein>
    <recommendedName>
        <fullName evidence="5">Enoyl-CoA hydratase domain-containing protein 3, mitochondrial</fullName>
    </recommendedName>
</protein>
<reference key="1">
    <citation type="journal article" date="2004" name="Genome Res.">
        <title>The status, quality, and expansion of the NIH full-length cDNA project: the Mammalian Gene Collection (MGC).</title>
        <authorList>
            <consortium name="The MGC Project Team"/>
        </authorList>
    </citation>
    <scope>NUCLEOTIDE SEQUENCE [LARGE SCALE MRNA]</scope>
    <source>
        <tissue>Prostate</tissue>
    </source>
</reference>
<name>ECHD3_RAT</name>
<comment type="function">
    <text evidence="1">May play a role in fatty acid biosynthesis and insulin sensitivity.</text>
</comment>
<comment type="subcellular location">
    <subcellularLocation>
        <location evidence="5">Mitochondrion</location>
    </subcellularLocation>
</comment>
<comment type="similarity">
    <text evidence="5">Belongs to the enoyl-CoA hydratase/isomerase family.</text>
</comment>
<accession>Q3MIE0</accession>
<organism>
    <name type="scientific">Rattus norvegicus</name>
    <name type="common">Rat</name>
    <dbReference type="NCBI Taxonomy" id="10116"/>
    <lineage>
        <taxon>Eukaryota</taxon>
        <taxon>Metazoa</taxon>
        <taxon>Chordata</taxon>
        <taxon>Craniata</taxon>
        <taxon>Vertebrata</taxon>
        <taxon>Euteleostomi</taxon>
        <taxon>Mammalia</taxon>
        <taxon>Eutheria</taxon>
        <taxon>Euarchontoglires</taxon>
        <taxon>Glires</taxon>
        <taxon>Rodentia</taxon>
        <taxon>Myomorpha</taxon>
        <taxon>Muroidea</taxon>
        <taxon>Muridae</taxon>
        <taxon>Murinae</taxon>
        <taxon>Rattus</taxon>
    </lineage>
</organism>
<keyword id="KW-0276">Fatty acid metabolism</keyword>
<keyword id="KW-0443">Lipid metabolism</keyword>
<keyword id="KW-0496">Mitochondrion</keyword>
<keyword id="KW-1185">Reference proteome</keyword>
<keyword id="KW-0809">Transit peptide</keyword>
<evidence type="ECO:0000250" key="1">
    <source>
        <dbReference type="UniProtKB" id="Q96DC8"/>
    </source>
</evidence>
<evidence type="ECO:0000250" key="2">
    <source>
        <dbReference type="UniProtKB" id="Q9D7J9"/>
    </source>
</evidence>
<evidence type="ECO:0000255" key="3"/>
<evidence type="ECO:0000256" key="4">
    <source>
        <dbReference type="SAM" id="MobiDB-lite"/>
    </source>
</evidence>
<evidence type="ECO:0000305" key="5"/>
<evidence type="ECO:0000312" key="6">
    <source>
        <dbReference type="RGD" id="1589147"/>
    </source>
</evidence>
<dbReference type="EMBL" id="BC101897">
    <property type="protein sequence ID" value="AAI01898.1"/>
    <property type="molecule type" value="mRNA"/>
</dbReference>
<dbReference type="RefSeq" id="NP_001094480.1">
    <property type="nucleotide sequence ID" value="NM_001101010.1"/>
</dbReference>
<dbReference type="SMR" id="Q3MIE0"/>
<dbReference type="FunCoup" id="Q3MIE0">
    <property type="interactions" value="219"/>
</dbReference>
<dbReference type="STRING" id="10116.ENSRNOP00000070466"/>
<dbReference type="GlyGen" id="Q3MIE0">
    <property type="glycosylation" value="1 site"/>
</dbReference>
<dbReference type="iPTMnet" id="Q3MIE0"/>
<dbReference type="PhosphoSitePlus" id="Q3MIE0"/>
<dbReference type="PaxDb" id="10116-ENSRNOP00000067768"/>
<dbReference type="GeneID" id="684538"/>
<dbReference type="KEGG" id="rno:684538"/>
<dbReference type="AGR" id="RGD:1589147"/>
<dbReference type="CTD" id="79746"/>
<dbReference type="RGD" id="1589147">
    <property type="gene designation" value="Echdc3"/>
</dbReference>
<dbReference type="eggNOG" id="KOG1682">
    <property type="taxonomic scope" value="Eukaryota"/>
</dbReference>
<dbReference type="InParanoid" id="Q3MIE0"/>
<dbReference type="PhylomeDB" id="Q3MIE0"/>
<dbReference type="PRO" id="PR:Q3MIE0"/>
<dbReference type="Proteomes" id="UP000002494">
    <property type="component" value="Unplaced"/>
</dbReference>
<dbReference type="GO" id="GO:0005739">
    <property type="term" value="C:mitochondrion"/>
    <property type="evidence" value="ECO:0000314"/>
    <property type="project" value="UniProtKB"/>
</dbReference>
<dbReference type="GO" id="GO:0004300">
    <property type="term" value="F:enoyl-CoA hydratase activity"/>
    <property type="evidence" value="ECO:0000315"/>
    <property type="project" value="UniProtKB"/>
</dbReference>
<dbReference type="GO" id="GO:0016836">
    <property type="term" value="F:hydro-lyase activity"/>
    <property type="evidence" value="ECO:0000318"/>
    <property type="project" value="GO_Central"/>
</dbReference>
<dbReference type="GO" id="GO:0006631">
    <property type="term" value="P:fatty acid metabolic process"/>
    <property type="evidence" value="ECO:0000315"/>
    <property type="project" value="UniProtKB"/>
</dbReference>
<dbReference type="GO" id="GO:1900078">
    <property type="term" value="P:positive regulation of cellular response to insulin stimulus"/>
    <property type="evidence" value="ECO:0000266"/>
    <property type="project" value="RGD"/>
</dbReference>
<dbReference type="CDD" id="cd06558">
    <property type="entry name" value="crotonase-like"/>
    <property type="match status" value="1"/>
</dbReference>
<dbReference type="Gene3D" id="3.90.226.10">
    <property type="entry name" value="2-enoyl-CoA Hydratase, Chain A, domain 1"/>
    <property type="match status" value="1"/>
</dbReference>
<dbReference type="Gene3D" id="1.10.12.10">
    <property type="entry name" value="Lyase 2-enoyl-coa Hydratase, Chain A, domain 2"/>
    <property type="match status" value="1"/>
</dbReference>
<dbReference type="InterPro" id="IPR029045">
    <property type="entry name" value="ClpP/crotonase-like_dom_sf"/>
</dbReference>
<dbReference type="InterPro" id="IPR001753">
    <property type="entry name" value="Enoyl-CoA_hydra/iso"/>
</dbReference>
<dbReference type="InterPro" id="IPR014748">
    <property type="entry name" value="Enoyl-CoA_hydra_C"/>
</dbReference>
<dbReference type="InterPro" id="IPR052377">
    <property type="entry name" value="Mitochondrial_ECH-domain"/>
</dbReference>
<dbReference type="NCBIfam" id="NF006008">
    <property type="entry name" value="PRK08139.1"/>
    <property type="match status" value="1"/>
</dbReference>
<dbReference type="PANTHER" id="PTHR43602">
    <property type="match status" value="1"/>
</dbReference>
<dbReference type="PANTHER" id="PTHR43602:SF1">
    <property type="entry name" value="ENOYL-COA HYDRATASE DOMAIN-CONTAINING PROTEIN 3, MITOCHONDRIAL"/>
    <property type="match status" value="1"/>
</dbReference>
<dbReference type="Pfam" id="PF00378">
    <property type="entry name" value="ECH_1"/>
    <property type="match status" value="1"/>
</dbReference>
<dbReference type="SUPFAM" id="SSF52096">
    <property type="entry name" value="ClpP/crotonase"/>
    <property type="match status" value="1"/>
</dbReference>
<gene>
    <name evidence="6" type="primary">Echdc3</name>
</gene>
<feature type="transit peptide" description="Mitochondrion" evidence="3">
    <location>
        <begin position="1"/>
        <end position="66"/>
    </location>
</feature>
<feature type="chain" id="PRO_0000333217" description="Enoyl-CoA hydratase domain-containing protein 3, mitochondrial">
    <location>
        <begin position="67"/>
        <end position="300"/>
    </location>
</feature>
<feature type="region of interest" description="Disordered" evidence="4">
    <location>
        <begin position="32"/>
        <end position="54"/>
    </location>
</feature>
<feature type="modified residue" description="N6-succinyllysine" evidence="2">
    <location>
        <position position="110"/>
    </location>
</feature>
<sequence>MALVAGLRAFGAKWPSWLRRSPWAPLSAGFCSPGSARPAGPESEPRLTSTRQQDGIRNIVLSNPRRRNALSLAMLKSLRSDILHEAESEDLKVIIISAEGPVFSSGHDLKELTGAQGRDYHTEVFQTCSEVMMLIRNHPVPIVAMVNGLATAAGCQLVASCDIAVASDKSSFATPGVNVGLFCSTPAVALGRAVPRKVALEMLFTGEPISAQEALRHGLISKVVPEEQLEEEATRIAKKIASLSRSVVALGKATFYKQLPQDLSTAYFLASQAMVDNLTLKDGQEGIEAFIQKRRPVWSH</sequence>
<proteinExistence type="evidence at transcript level"/>